<proteinExistence type="inferred from homology"/>
<feature type="chain" id="PRO_1000002082" description="SsrA-binding protein">
    <location>
        <begin position="1"/>
        <end position="154"/>
    </location>
</feature>
<comment type="function">
    <text evidence="1">Required for rescue of stalled ribosomes mediated by trans-translation. Binds to transfer-messenger RNA (tmRNA), required for stable association of tmRNA with ribosomes. tmRNA and SmpB together mimic tRNA shape, replacing the anticodon stem-loop with SmpB. tmRNA is encoded by the ssrA gene; the 2 termini fold to resemble tRNA(Ala) and it encodes a 'tag peptide', a short internal open reading frame. During trans-translation Ala-aminoacylated tmRNA acts like a tRNA, entering the A-site of stalled ribosomes, displacing the stalled mRNA. The ribosome then switches to translate the ORF on the tmRNA; the nascent peptide is terminated with the 'tag peptide' encoded by the tmRNA and targeted for degradation. The ribosome is freed to recommence translation, which seems to be the essential function of trans-translation.</text>
</comment>
<comment type="subcellular location">
    <subcellularLocation>
        <location evidence="1">Cytoplasm</location>
    </subcellularLocation>
    <text evidence="1">The tmRNA-SmpB complex associates with stalled 70S ribosomes.</text>
</comment>
<comment type="similarity">
    <text evidence="1">Belongs to the SmpB family.</text>
</comment>
<dbReference type="EMBL" id="CP000284">
    <property type="protein sequence ID" value="ABE49413.1"/>
    <property type="molecule type" value="Genomic_DNA"/>
</dbReference>
<dbReference type="SMR" id="Q1H274"/>
<dbReference type="STRING" id="265072.Mfla_1145"/>
<dbReference type="KEGG" id="mfa:Mfla_1145"/>
<dbReference type="eggNOG" id="COG0691">
    <property type="taxonomic scope" value="Bacteria"/>
</dbReference>
<dbReference type="HOGENOM" id="CLU_108953_3_0_4"/>
<dbReference type="OrthoDB" id="9805462at2"/>
<dbReference type="Proteomes" id="UP000002440">
    <property type="component" value="Chromosome"/>
</dbReference>
<dbReference type="GO" id="GO:0005829">
    <property type="term" value="C:cytosol"/>
    <property type="evidence" value="ECO:0007669"/>
    <property type="project" value="TreeGrafter"/>
</dbReference>
<dbReference type="GO" id="GO:0003723">
    <property type="term" value="F:RNA binding"/>
    <property type="evidence" value="ECO:0007669"/>
    <property type="project" value="UniProtKB-UniRule"/>
</dbReference>
<dbReference type="GO" id="GO:0070929">
    <property type="term" value="P:trans-translation"/>
    <property type="evidence" value="ECO:0007669"/>
    <property type="project" value="UniProtKB-UniRule"/>
</dbReference>
<dbReference type="CDD" id="cd09294">
    <property type="entry name" value="SmpB"/>
    <property type="match status" value="1"/>
</dbReference>
<dbReference type="Gene3D" id="2.40.280.10">
    <property type="match status" value="1"/>
</dbReference>
<dbReference type="HAMAP" id="MF_00023">
    <property type="entry name" value="SmpB"/>
    <property type="match status" value="1"/>
</dbReference>
<dbReference type="InterPro" id="IPR023620">
    <property type="entry name" value="SmpB"/>
</dbReference>
<dbReference type="InterPro" id="IPR000037">
    <property type="entry name" value="SsrA-bd_prot"/>
</dbReference>
<dbReference type="InterPro" id="IPR020081">
    <property type="entry name" value="SsrA-bd_prot_CS"/>
</dbReference>
<dbReference type="NCBIfam" id="NF003843">
    <property type="entry name" value="PRK05422.1"/>
    <property type="match status" value="1"/>
</dbReference>
<dbReference type="NCBIfam" id="TIGR00086">
    <property type="entry name" value="smpB"/>
    <property type="match status" value="1"/>
</dbReference>
<dbReference type="PANTHER" id="PTHR30308:SF2">
    <property type="entry name" value="SSRA-BINDING PROTEIN"/>
    <property type="match status" value="1"/>
</dbReference>
<dbReference type="PANTHER" id="PTHR30308">
    <property type="entry name" value="TMRNA-BINDING COMPONENT OF TRANS-TRANSLATION TAGGING COMPLEX"/>
    <property type="match status" value="1"/>
</dbReference>
<dbReference type="Pfam" id="PF01668">
    <property type="entry name" value="SmpB"/>
    <property type="match status" value="1"/>
</dbReference>
<dbReference type="SUPFAM" id="SSF74982">
    <property type="entry name" value="Small protein B (SmpB)"/>
    <property type="match status" value="1"/>
</dbReference>
<dbReference type="PROSITE" id="PS01317">
    <property type="entry name" value="SSRP"/>
    <property type="match status" value="1"/>
</dbReference>
<keyword id="KW-0963">Cytoplasm</keyword>
<keyword id="KW-1185">Reference proteome</keyword>
<keyword id="KW-0694">RNA-binding</keyword>
<gene>
    <name evidence="1" type="primary">smpB</name>
    <name type="ordered locus">Mfla_1145</name>
</gene>
<evidence type="ECO:0000255" key="1">
    <source>
        <dbReference type="HAMAP-Rule" id="MF_00023"/>
    </source>
</evidence>
<name>SSRP_METFK</name>
<sequence>MSIAQNKKAFHDYFIEEKYEAGIVLEGWEVKAIRENRVQLKEAYVIIQRGEIYLIGCHVTPLGSASTHVRPDAIRTRKLLLHSEQIAKLIGKVERAGYTLVPLDMHYTRGRIKVQIGLAKGKKQYDKRHSEKEKDWKREQSSLMKKYVKTQAGS</sequence>
<organism>
    <name type="scientific">Methylobacillus flagellatus (strain ATCC 51484 / DSM 6875 / VKM B-1610 / KT)</name>
    <dbReference type="NCBI Taxonomy" id="265072"/>
    <lineage>
        <taxon>Bacteria</taxon>
        <taxon>Pseudomonadati</taxon>
        <taxon>Pseudomonadota</taxon>
        <taxon>Betaproteobacteria</taxon>
        <taxon>Nitrosomonadales</taxon>
        <taxon>Methylophilaceae</taxon>
        <taxon>Methylobacillus</taxon>
    </lineage>
</organism>
<protein>
    <recommendedName>
        <fullName evidence="1">SsrA-binding protein</fullName>
    </recommendedName>
    <alternativeName>
        <fullName evidence="1">Small protein B</fullName>
    </alternativeName>
</protein>
<reference key="1">
    <citation type="submission" date="2006-03" db="EMBL/GenBank/DDBJ databases">
        <title>Complete sequence of Methylobacillus flagellatus KT.</title>
        <authorList>
            <consortium name="US DOE Joint Genome Institute"/>
            <person name="Copeland A."/>
            <person name="Lucas S."/>
            <person name="Lapidus A."/>
            <person name="Barry K."/>
            <person name="Detter J.C."/>
            <person name="Glavina del Rio T."/>
            <person name="Hammon N."/>
            <person name="Israni S."/>
            <person name="Dalin E."/>
            <person name="Tice H."/>
            <person name="Pitluck S."/>
            <person name="Brettin T."/>
            <person name="Bruce D."/>
            <person name="Han C."/>
            <person name="Tapia R."/>
            <person name="Saunders E."/>
            <person name="Gilna P."/>
            <person name="Schmutz J."/>
            <person name="Larimer F."/>
            <person name="Land M."/>
            <person name="Kyrpides N."/>
            <person name="Anderson I."/>
            <person name="Richardson P."/>
        </authorList>
    </citation>
    <scope>NUCLEOTIDE SEQUENCE [LARGE SCALE GENOMIC DNA]</scope>
    <source>
        <strain>ATCC 51484 / DSM 6875 / VKM B-1610 / KT</strain>
    </source>
</reference>
<accession>Q1H274</accession>